<keyword id="KW-0066">ATP synthesis</keyword>
<keyword id="KW-0067">ATP-binding</keyword>
<keyword id="KW-0997">Cell inner membrane</keyword>
<keyword id="KW-1003">Cell membrane</keyword>
<keyword id="KW-0139">CF(1)</keyword>
<keyword id="KW-0375">Hydrogen ion transport</keyword>
<keyword id="KW-0406">Ion transport</keyword>
<keyword id="KW-0472">Membrane</keyword>
<keyword id="KW-0547">Nucleotide-binding</keyword>
<keyword id="KW-1278">Translocase</keyword>
<keyword id="KW-0813">Transport</keyword>
<name>ATPB_XANC8</name>
<feature type="chain" id="PRO_0000254429" description="ATP synthase subunit beta">
    <location>
        <begin position="1"/>
        <end position="468"/>
    </location>
</feature>
<feature type="binding site" evidence="1">
    <location>
        <begin position="148"/>
        <end position="155"/>
    </location>
    <ligand>
        <name>ATP</name>
        <dbReference type="ChEBI" id="CHEBI:30616"/>
    </ligand>
</feature>
<organism>
    <name type="scientific">Xanthomonas campestris pv. campestris (strain 8004)</name>
    <dbReference type="NCBI Taxonomy" id="314565"/>
    <lineage>
        <taxon>Bacteria</taxon>
        <taxon>Pseudomonadati</taxon>
        <taxon>Pseudomonadota</taxon>
        <taxon>Gammaproteobacteria</taxon>
        <taxon>Lysobacterales</taxon>
        <taxon>Lysobacteraceae</taxon>
        <taxon>Xanthomonas</taxon>
    </lineage>
</organism>
<evidence type="ECO:0000255" key="1">
    <source>
        <dbReference type="HAMAP-Rule" id="MF_01347"/>
    </source>
</evidence>
<sequence length="468" mass="50997">MSQGKIVQIIGAVVDVEFQRNEVPKVYHALKVEGTAITLEVQQQLGDGVVRTIALGSTDGLKRNLLATNTERAISVPVGAGTLGRIMDVLGRPIDEAGDVQASDHWEIHRAAPSYEDQSSSTELLETGIKVIDLMCPFAKGGKVGLFGGAGVGKTVNMMELINNIAKAHSGLSVFAGVGERTREGNDFYHEMKDSNVLDKVAMVYGQMNEPPGNRLRVALTGLTMAEYFRDEKDENGKGKDVLLFVDNIYRYTLAGTEVSALLGRMPSAVGYQPTLAEEMGVLQERITSTKSGSITSIQAVYVPADDLTDPSPATTFAHLDSTVTLSRNIASLGIYPAVDPLDSTSRQMDPLVIGHEHYDTAQRVQQTLQKYKELKDIIAILGMDELSEEDKQSVSRARKIERFFSQPFHVAEVFTGSPGKYVSLKDTIRGFKAICDGEYDHLPEQAFYMVGSIEEAVEKANKMSAKA</sequence>
<protein>
    <recommendedName>
        <fullName evidence="1">ATP synthase subunit beta</fullName>
        <ecNumber evidence="1">7.1.2.2</ecNumber>
    </recommendedName>
    <alternativeName>
        <fullName evidence="1">ATP synthase F1 sector subunit beta</fullName>
    </alternativeName>
    <alternativeName>
        <fullName evidence="1">F-ATPase subunit beta</fullName>
    </alternativeName>
</protein>
<reference key="1">
    <citation type="journal article" date="2005" name="Genome Res.">
        <title>Comparative and functional genomic analyses of the pathogenicity of phytopathogen Xanthomonas campestris pv. campestris.</title>
        <authorList>
            <person name="Qian W."/>
            <person name="Jia Y."/>
            <person name="Ren S.-X."/>
            <person name="He Y.-Q."/>
            <person name="Feng J.-X."/>
            <person name="Lu L.-F."/>
            <person name="Sun Q."/>
            <person name="Ying G."/>
            <person name="Tang D.-J."/>
            <person name="Tang H."/>
            <person name="Wu W."/>
            <person name="Hao P."/>
            <person name="Wang L."/>
            <person name="Jiang B.-L."/>
            <person name="Zeng S."/>
            <person name="Gu W.-Y."/>
            <person name="Lu G."/>
            <person name="Rong L."/>
            <person name="Tian Y."/>
            <person name="Yao Z."/>
            <person name="Fu G."/>
            <person name="Chen B."/>
            <person name="Fang R."/>
            <person name="Qiang B."/>
            <person name="Chen Z."/>
            <person name="Zhao G.-P."/>
            <person name="Tang J.-L."/>
            <person name="He C."/>
        </authorList>
    </citation>
    <scope>NUCLEOTIDE SEQUENCE [LARGE SCALE GENOMIC DNA]</scope>
    <source>
        <strain>8004</strain>
    </source>
</reference>
<dbReference type="EC" id="7.1.2.2" evidence="1"/>
<dbReference type="EMBL" id="CP000050">
    <property type="protein sequence ID" value="AAY50719.1"/>
    <property type="molecule type" value="Genomic_DNA"/>
</dbReference>
<dbReference type="RefSeq" id="WP_011035801.1">
    <property type="nucleotide sequence ID" value="NZ_CP155948.1"/>
</dbReference>
<dbReference type="SMR" id="Q4UQF4"/>
<dbReference type="KEGG" id="xcb:XC_3678"/>
<dbReference type="HOGENOM" id="CLU_022398_0_2_6"/>
<dbReference type="Proteomes" id="UP000000420">
    <property type="component" value="Chromosome"/>
</dbReference>
<dbReference type="GO" id="GO:0005886">
    <property type="term" value="C:plasma membrane"/>
    <property type="evidence" value="ECO:0007669"/>
    <property type="project" value="UniProtKB-SubCell"/>
</dbReference>
<dbReference type="GO" id="GO:0045259">
    <property type="term" value="C:proton-transporting ATP synthase complex"/>
    <property type="evidence" value="ECO:0007669"/>
    <property type="project" value="UniProtKB-KW"/>
</dbReference>
<dbReference type="GO" id="GO:0005524">
    <property type="term" value="F:ATP binding"/>
    <property type="evidence" value="ECO:0007669"/>
    <property type="project" value="UniProtKB-UniRule"/>
</dbReference>
<dbReference type="GO" id="GO:0016887">
    <property type="term" value="F:ATP hydrolysis activity"/>
    <property type="evidence" value="ECO:0007669"/>
    <property type="project" value="InterPro"/>
</dbReference>
<dbReference type="GO" id="GO:0046933">
    <property type="term" value="F:proton-transporting ATP synthase activity, rotational mechanism"/>
    <property type="evidence" value="ECO:0007669"/>
    <property type="project" value="UniProtKB-UniRule"/>
</dbReference>
<dbReference type="CDD" id="cd18110">
    <property type="entry name" value="ATP-synt_F1_beta_C"/>
    <property type="match status" value="1"/>
</dbReference>
<dbReference type="CDD" id="cd18115">
    <property type="entry name" value="ATP-synt_F1_beta_N"/>
    <property type="match status" value="1"/>
</dbReference>
<dbReference type="CDD" id="cd01133">
    <property type="entry name" value="F1-ATPase_beta_CD"/>
    <property type="match status" value="1"/>
</dbReference>
<dbReference type="FunFam" id="1.10.1140.10:FF:000001">
    <property type="entry name" value="ATP synthase subunit beta"/>
    <property type="match status" value="1"/>
</dbReference>
<dbReference type="FunFam" id="3.40.50.300:FF:000004">
    <property type="entry name" value="ATP synthase subunit beta"/>
    <property type="match status" value="1"/>
</dbReference>
<dbReference type="Gene3D" id="2.40.10.170">
    <property type="match status" value="1"/>
</dbReference>
<dbReference type="Gene3D" id="1.10.1140.10">
    <property type="entry name" value="Bovine Mitochondrial F1-atpase, Atp Synthase Beta Chain, Chain D, domain 3"/>
    <property type="match status" value="1"/>
</dbReference>
<dbReference type="Gene3D" id="3.40.50.300">
    <property type="entry name" value="P-loop containing nucleotide triphosphate hydrolases"/>
    <property type="match status" value="1"/>
</dbReference>
<dbReference type="HAMAP" id="MF_01347">
    <property type="entry name" value="ATP_synth_beta_bact"/>
    <property type="match status" value="1"/>
</dbReference>
<dbReference type="InterPro" id="IPR003593">
    <property type="entry name" value="AAA+_ATPase"/>
</dbReference>
<dbReference type="InterPro" id="IPR055190">
    <property type="entry name" value="ATP-synt_VA_C"/>
</dbReference>
<dbReference type="InterPro" id="IPR005722">
    <property type="entry name" value="ATP_synth_F1_bsu"/>
</dbReference>
<dbReference type="InterPro" id="IPR020003">
    <property type="entry name" value="ATPase_a/bsu_AS"/>
</dbReference>
<dbReference type="InterPro" id="IPR050053">
    <property type="entry name" value="ATPase_alpha/beta_chains"/>
</dbReference>
<dbReference type="InterPro" id="IPR004100">
    <property type="entry name" value="ATPase_F1/V1/A1_a/bsu_N"/>
</dbReference>
<dbReference type="InterPro" id="IPR036121">
    <property type="entry name" value="ATPase_F1/V1/A1_a/bsu_N_sf"/>
</dbReference>
<dbReference type="InterPro" id="IPR000194">
    <property type="entry name" value="ATPase_F1/V1/A1_a/bsu_nucl-bd"/>
</dbReference>
<dbReference type="InterPro" id="IPR024034">
    <property type="entry name" value="ATPase_F1/V1_b/a_C"/>
</dbReference>
<dbReference type="InterPro" id="IPR027417">
    <property type="entry name" value="P-loop_NTPase"/>
</dbReference>
<dbReference type="NCBIfam" id="TIGR01039">
    <property type="entry name" value="atpD"/>
    <property type="match status" value="1"/>
</dbReference>
<dbReference type="PANTHER" id="PTHR15184">
    <property type="entry name" value="ATP SYNTHASE"/>
    <property type="match status" value="1"/>
</dbReference>
<dbReference type="PANTHER" id="PTHR15184:SF71">
    <property type="entry name" value="ATP SYNTHASE SUBUNIT BETA, MITOCHONDRIAL"/>
    <property type="match status" value="1"/>
</dbReference>
<dbReference type="Pfam" id="PF00006">
    <property type="entry name" value="ATP-synt_ab"/>
    <property type="match status" value="1"/>
</dbReference>
<dbReference type="Pfam" id="PF02874">
    <property type="entry name" value="ATP-synt_ab_N"/>
    <property type="match status" value="1"/>
</dbReference>
<dbReference type="Pfam" id="PF22919">
    <property type="entry name" value="ATP-synt_VA_C"/>
    <property type="match status" value="1"/>
</dbReference>
<dbReference type="SMART" id="SM00382">
    <property type="entry name" value="AAA"/>
    <property type="match status" value="1"/>
</dbReference>
<dbReference type="SUPFAM" id="SSF47917">
    <property type="entry name" value="C-terminal domain of alpha and beta subunits of F1 ATP synthase"/>
    <property type="match status" value="1"/>
</dbReference>
<dbReference type="SUPFAM" id="SSF50615">
    <property type="entry name" value="N-terminal domain of alpha and beta subunits of F1 ATP synthase"/>
    <property type="match status" value="1"/>
</dbReference>
<dbReference type="SUPFAM" id="SSF52540">
    <property type="entry name" value="P-loop containing nucleoside triphosphate hydrolases"/>
    <property type="match status" value="1"/>
</dbReference>
<dbReference type="PROSITE" id="PS00152">
    <property type="entry name" value="ATPASE_ALPHA_BETA"/>
    <property type="match status" value="1"/>
</dbReference>
<comment type="function">
    <text evidence="1">Produces ATP from ADP in the presence of a proton gradient across the membrane. The catalytic sites are hosted primarily by the beta subunits.</text>
</comment>
<comment type="catalytic activity">
    <reaction evidence="1">
        <text>ATP + H2O + 4 H(+)(in) = ADP + phosphate + 5 H(+)(out)</text>
        <dbReference type="Rhea" id="RHEA:57720"/>
        <dbReference type="ChEBI" id="CHEBI:15377"/>
        <dbReference type="ChEBI" id="CHEBI:15378"/>
        <dbReference type="ChEBI" id="CHEBI:30616"/>
        <dbReference type="ChEBI" id="CHEBI:43474"/>
        <dbReference type="ChEBI" id="CHEBI:456216"/>
        <dbReference type="EC" id="7.1.2.2"/>
    </reaction>
</comment>
<comment type="subunit">
    <text evidence="1">F-type ATPases have 2 components, CF(1) - the catalytic core - and CF(0) - the membrane proton channel. CF(1) has five subunits: alpha(3), beta(3), gamma(1), delta(1), epsilon(1). CF(0) has three main subunits: a(1), b(2) and c(9-12). The alpha and beta chains form an alternating ring which encloses part of the gamma chain. CF(1) is attached to CF(0) by a central stalk formed by the gamma and epsilon chains, while a peripheral stalk is formed by the delta and b chains.</text>
</comment>
<comment type="subcellular location">
    <subcellularLocation>
        <location evidence="1">Cell inner membrane</location>
        <topology evidence="1">Peripheral membrane protein</topology>
    </subcellularLocation>
</comment>
<comment type="similarity">
    <text evidence="1">Belongs to the ATPase alpha/beta chains family.</text>
</comment>
<accession>Q4UQF4</accession>
<proteinExistence type="inferred from homology"/>
<gene>
    <name evidence="1" type="primary">atpD</name>
    <name type="ordered locus">XC_3678</name>
</gene>